<comment type="function">
    <text evidence="1">Assembles around the rod to form the L-ring and probably protects the motor/basal body from shearing forces during rotation.</text>
</comment>
<comment type="subunit">
    <text evidence="1">The basal body constitutes a major portion of the flagellar organelle and consists of four rings (L,P,S, and M) mounted on a central rod.</text>
</comment>
<comment type="subcellular location">
    <subcellularLocation>
        <location evidence="1">Periplasm</location>
    </subcellularLocation>
    <subcellularLocation>
        <location evidence="1">Bacterial flagellum basal body</location>
    </subcellularLocation>
</comment>
<comment type="similarity">
    <text evidence="1">Belongs to the FlgI family.</text>
</comment>
<comment type="sequence caution" evidence="2">
    <conflict type="erroneous initiation">
        <sequence resource="EMBL-CDS" id="AAS94998"/>
    </conflict>
</comment>
<dbReference type="EMBL" id="AE017285">
    <property type="protein sequence ID" value="AAS94998.1"/>
    <property type="status" value="ALT_INIT"/>
    <property type="molecule type" value="Genomic_DNA"/>
</dbReference>
<dbReference type="RefSeq" id="WP_010937822.1">
    <property type="nucleotide sequence ID" value="NZ_CABHLV010000001.1"/>
</dbReference>
<dbReference type="RefSeq" id="YP_009739.1">
    <property type="nucleotide sequence ID" value="NC_002937.3"/>
</dbReference>
<dbReference type="SMR" id="Q72EQ3"/>
<dbReference type="STRING" id="882.DVU_0516"/>
<dbReference type="PaxDb" id="882-DVU_0516"/>
<dbReference type="EnsemblBacteria" id="AAS94998">
    <property type="protein sequence ID" value="AAS94998"/>
    <property type="gene ID" value="DVU_0516"/>
</dbReference>
<dbReference type="KEGG" id="dvu:DVU_0516"/>
<dbReference type="PATRIC" id="fig|882.5.peg.493"/>
<dbReference type="eggNOG" id="COG1706">
    <property type="taxonomic scope" value="Bacteria"/>
</dbReference>
<dbReference type="HOGENOM" id="CLU_045235_1_0_7"/>
<dbReference type="OrthoDB" id="9786431at2"/>
<dbReference type="PhylomeDB" id="Q72EQ3"/>
<dbReference type="Proteomes" id="UP000002194">
    <property type="component" value="Chromosome"/>
</dbReference>
<dbReference type="GO" id="GO:0009428">
    <property type="term" value="C:bacterial-type flagellum basal body, distal rod, P ring"/>
    <property type="evidence" value="ECO:0007669"/>
    <property type="project" value="InterPro"/>
</dbReference>
<dbReference type="GO" id="GO:0030288">
    <property type="term" value="C:outer membrane-bounded periplasmic space"/>
    <property type="evidence" value="ECO:0007669"/>
    <property type="project" value="InterPro"/>
</dbReference>
<dbReference type="GO" id="GO:0005198">
    <property type="term" value="F:structural molecule activity"/>
    <property type="evidence" value="ECO:0007669"/>
    <property type="project" value="InterPro"/>
</dbReference>
<dbReference type="GO" id="GO:0071973">
    <property type="term" value="P:bacterial-type flagellum-dependent cell motility"/>
    <property type="evidence" value="ECO:0007669"/>
    <property type="project" value="InterPro"/>
</dbReference>
<dbReference type="HAMAP" id="MF_00416">
    <property type="entry name" value="FlgI"/>
    <property type="match status" value="1"/>
</dbReference>
<dbReference type="InterPro" id="IPR001782">
    <property type="entry name" value="Flag_FlgI"/>
</dbReference>
<dbReference type="NCBIfam" id="NF003676">
    <property type="entry name" value="PRK05303.1"/>
    <property type="match status" value="1"/>
</dbReference>
<dbReference type="PANTHER" id="PTHR30381">
    <property type="entry name" value="FLAGELLAR P-RING PERIPLASMIC PROTEIN FLGI"/>
    <property type="match status" value="1"/>
</dbReference>
<dbReference type="PANTHER" id="PTHR30381:SF0">
    <property type="entry name" value="FLAGELLAR P-RING PROTEIN"/>
    <property type="match status" value="1"/>
</dbReference>
<dbReference type="Pfam" id="PF02119">
    <property type="entry name" value="FlgI"/>
    <property type="match status" value="1"/>
</dbReference>
<dbReference type="PRINTS" id="PR01010">
    <property type="entry name" value="FLGPRINGFLGI"/>
</dbReference>
<evidence type="ECO:0000255" key="1">
    <source>
        <dbReference type="HAMAP-Rule" id="MF_00416"/>
    </source>
</evidence>
<evidence type="ECO:0000305" key="2"/>
<name>FLGI_NITV2</name>
<protein>
    <recommendedName>
        <fullName evidence="1">Flagellar P-ring protein</fullName>
    </recommendedName>
    <alternativeName>
        <fullName evidence="1">Basal body P-ring protein</fullName>
    </alternativeName>
</protein>
<keyword id="KW-0975">Bacterial flagellum</keyword>
<keyword id="KW-0574">Periplasm</keyword>
<keyword id="KW-1185">Reference proteome</keyword>
<keyword id="KW-0732">Signal</keyword>
<feature type="signal peptide" evidence="1">
    <location>
        <begin position="1"/>
        <end position="24"/>
    </location>
</feature>
<feature type="chain" id="PRO_0000041795" description="Flagellar P-ring protein">
    <location>
        <begin position="25"/>
        <end position="366"/>
    </location>
</feature>
<proteinExistence type="inferred from homology"/>
<reference key="1">
    <citation type="journal article" date="2004" name="Nat. Biotechnol.">
        <title>The genome sequence of the anaerobic, sulfate-reducing bacterium Desulfovibrio vulgaris Hildenborough.</title>
        <authorList>
            <person name="Heidelberg J.F."/>
            <person name="Seshadri R."/>
            <person name="Haveman S.A."/>
            <person name="Hemme C.L."/>
            <person name="Paulsen I.T."/>
            <person name="Kolonay J.F."/>
            <person name="Eisen J.A."/>
            <person name="Ward N.L."/>
            <person name="Methe B.A."/>
            <person name="Brinkac L.M."/>
            <person name="Daugherty S.C."/>
            <person name="DeBoy R.T."/>
            <person name="Dodson R.J."/>
            <person name="Durkin A.S."/>
            <person name="Madupu R."/>
            <person name="Nelson W.C."/>
            <person name="Sullivan S.A."/>
            <person name="Fouts D.E."/>
            <person name="Haft D.H."/>
            <person name="Selengut J."/>
            <person name="Peterson J.D."/>
            <person name="Davidsen T.M."/>
            <person name="Zafar N."/>
            <person name="Zhou L."/>
            <person name="Radune D."/>
            <person name="Dimitrov G."/>
            <person name="Hance M."/>
            <person name="Tran K."/>
            <person name="Khouri H.M."/>
            <person name="Gill J."/>
            <person name="Utterback T.R."/>
            <person name="Feldblyum T.V."/>
            <person name="Wall J.D."/>
            <person name="Voordouw G."/>
            <person name="Fraser C.M."/>
        </authorList>
    </citation>
    <scope>NUCLEOTIDE SEQUENCE [LARGE SCALE GENOMIC DNA]</scope>
    <source>
        <strain>ATCC 29579 / DSM 644 / CCUG 34227 / NCIMB 8303 / VKM B-1760 / Hildenborough</strain>
    </source>
</reference>
<sequence length="366" mass="38241">MWPLLLAVALSTLLPLAMPGSAGAVRIKDIATFSGVRDNQLVGYGLVVGLGGTGDKKESVFTVSSMVNMLERMGVAVDPKQLKPKNVASVMVTARMPVSAKPGARLDVTVSSMGDATSLLGGVLLQTPLKGVDGKIYGLAQGSLALGGFSAEGQAARAQKNITTVGLIPGGAIIERGVPFEFNQQDRLTLNLSTADFSTAQQVAERLNAAMGGRYANAVDASTVAMDVPPNYRGNLVPLMASVENIEVAPDAPARVVVDEKTGTVVLGRDVRISRVAVAHGSLQVTVQESQQVSQPAPFSQGQTVVTPQTNVNVREENRRLMMIEGATLQELVDGLNAIGATPRDLISILRAMKAAGALHAELEVI</sequence>
<gene>
    <name evidence="1" type="primary">flgI</name>
    <name type="ordered locus">DVU_0516</name>
</gene>
<accession>Q72EQ3</accession>
<organism>
    <name type="scientific">Nitratidesulfovibrio vulgaris (strain ATCC 29579 / DSM 644 / CCUG 34227 / NCIMB 8303 / VKM B-1760 / Hildenborough)</name>
    <name type="common">Desulfovibrio vulgaris</name>
    <dbReference type="NCBI Taxonomy" id="882"/>
    <lineage>
        <taxon>Bacteria</taxon>
        <taxon>Pseudomonadati</taxon>
        <taxon>Thermodesulfobacteriota</taxon>
        <taxon>Desulfovibrionia</taxon>
        <taxon>Desulfovibrionales</taxon>
        <taxon>Desulfovibrionaceae</taxon>
        <taxon>Nitratidesulfovibrio</taxon>
    </lineage>
</organism>